<comment type="function">
    <text evidence="1">Located on the platform of the 30S subunit, it bridges several disparate RNA helices of the 16S rRNA. Forms part of the Shine-Dalgarno cleft in the 70S ribosome.</text>
</comment>
<comment type="subunit">
    <text evidence="1">Part of the 30S ribosomal subunit. Interacts with proteins S7 and S18. Binds to IF-3.</text>
</comment>
<comment type="similarity">
    <text evidence="1">Belongs to the universal ribosomal protein uS11 family.</text>
</comment>
<evidence type="ECO:0000255" key="1">
    <source>
        <dbReference type="HAMAP-Rule" id="MF_01310"/>
    </source>
</evidence>
<evidence type="ECO:0000305" key="2"/>
<keyword id="KW-1185">Reference proteome</keyword>
<keyword id="KW-0687">Ribonucleoprotein</keyword>
<keyword id="KW-0689">Ribosomal protein</keyword>
<keyword id="KW-0694">RNA-binding</keyword>
<keyword id="KW-0699">rRNA-binding</keyword>
<gene>
    <name evidence="1" type="primary">rpsK</name>
    <name type="ordered locus">Msil_2990</name>
</gene>
<sequence length="129" mass="14001">MAKEATRVRRRERKNIVSGVAHVNSTFNNTMITITDAQGNTISWSSAGTMGFKGSRKSTPYAAQMAAEDCARKAAEHGMRTLEVEVSGPGSGRESALRALQAAGFTVTSIRDVTPIPHNGCRPRKRRRV</sequence>
<dbReference type="EMBL" id="CP001280">
    <property type="protein sequence ID" value="ACK51901.1"/>
    <property type="molecule type" value="Genomic_DNA"/>
</dbReference>
<dbReference type="RefSeq" id="WP_012591970.1">
    <property type="nucleotide sequence ID" value="NC_011666.1"/>
</dbReference>
<dbReference type="SMR" id="B8EIT4"/>
<dbReference type="STRING" id="395965.Msil_2990"/>
<dbReference type="KEGG" id="msl:Msil_2990"/>
<dbReference type="eggNOG" id="COG0100">
    <property type="taxonomic scope" value="Bacteria"/>
</dbReference>
<dbReference type="HOGENOM" id="CLU_072439_5_0_5"/>
<dbReference type="OrthoDB" id="9806415at2"/>
<dbReference type="Proteomes" id="UP000002257">
    <property type="component" value="Chromosome"/>
</dbReference>
<dbReference type="GO" id="GO:1990904">
    <property type="term" value="C:ribonucleoprotein complex"/>
    <property type="evidence" value="ECO:0007669"/>
    <property type="project" value="UniProtKB-KW"/>
</dbReference>
<dbReference type="GO" id="GO:0005840">
    <property type="term" value="C:ribosome"/>
    <property type="evidence" value="ECO:0007669"/>
    <property type="project" value="UniProtKB-KW"/>
</dbReference>
<dbReference type="GO" id="GO:0019843">
    <property type="term" value="F:rRNA binding"/>
    <property type="evidence" value="ECO:0007669"/>
    <property type="project" value="UniProtKB-UniRule"/>
</dbReference>
<dbReference type="GO" id="GO:0003735">
    <property type="term" value="F:structural constituent of ribosome"/>
    <property type="evidence" value="ECO:0007669"/>
    <property type="project" value="InterPro"/>
</dbReference>
<dbReference type="GO" id="GO:0006412">
    <property type="term" value="P:translation"/>
    <property type="evidence" value="ECO:0007669"/>
    <property type="project" value="UniProtKB-UniRule"/>
</dbReference>
<dbReference type="FunFam" id="3.30.420.80:FF:000001">
    <property type="entry name" value="30S ribosomal protein S11"/>
    <property type="match status" value="1"/>
</dbReference>
<dbReference type="Gene3D" id="3.30.420.80">
    <property type="entry name" value="Ribosomal protein S11"/>
    <property type="match status" value="1"/>
</dbReference>
<dbReference type="HAMAP" id="MF_01310">
    <property type="entry name" value="Ribosomal_uS11"/>
    <property type="match status" value="1"/>
</dbReference>
<dbReference type="InterPro" id="IPR001971">
    <property type="entry name" value="Ribosomal_uS11"/>
</dbReference>
<dbReference type="InterPro" id="IPR019981">
    <property type="entry name" value="Ribosomal_uS11_bac-type"/>
</dbReference>
<dbReference type="InterPro" id="IPR018102">
    <property type="entry name" value="Ribosomal_uS11_CS"/>
</dbReference>
<dbReference type="InterPro" id="IPR036967">
    <property type="entry name" value="Ribosomal_uS11_sf"/>
</dbReference>
<dbReference type="NCBIfam" id="NF003698">
    <property type="entry name" value="PRK05309.1"/>
    <property type="match status" value="1"/>
</dbReference>
<dbReference type="NCBIfam" id="TIGR03632">
    <property type="entry name" value="uS11_bact"/>
    <property type="match status" value="1"/>
</dbReference>
<dbReference type="PANTHER" id="PTHR11759">
    <property type="entry name" value="40S RIBOSOMAL PROTEIN S14/30S RIBOSOMAL PROTEIN S11"/>
    <property type="match status" value="1"/>
</dbReference>
<dbReference type="Pfam" id="PF00411">
    <property type="entry name" value="Ribosomal_S11"/>
    <property type="match status" value="1"/>
</dbReference>
<dbReference type="PIRSF" id="PIRSF002131">
    <property type="entry name" value="Ribosomal_S11"/>
    <property type="match status" value="1"/>
</dbReference>
<dbReference type="SUPFAM" id="SSF53137">
    <property type="entry name" value="Translational machinery components"/>
    <property type="match status" value="1"/>
</dbReference>
<dbReference type="PROSITE" id="PS00054">
    <property type="entry name" value="RIBOSOMAL_S11"/>
    <property type="match status" value="1"/>
</dbReference>
<accession>B8EIT4</accession>
<proteinExistence type="inferred from homology"/>
<protein>
    <recommendedName>
        <fullName evidence="1">Small ribosomal subunit protein uS11</fullName>
    </recommendedName>
    <alternativeName>
        <fullName evidence="2">30S ribosomal protein S11</fullName>
    </alternativeName>
</protein>
<organism>
    <name type="scientific">Methylocella silvestris (strain DSM 15510 / CIP 108128 / LMG 27833 / NCIMB 13906 / BL2)</name>
    <dbReference type="NCBI Taxonomy" id="395965"/>
    <lineage>
        <taxon>Bacteria</taxon>
        <taxon>Pseudomonadati</taxon>
        <taxon>Pseudomonadota</taxon>
        <taxon>Alphaproteobacteria</taxon>
        <taxon>Hyphomicrobiales</taxon>
        <taxon>Beijerinckiaceae</taxon>
        <taxon>Methylocella</taxon>
    </lineage>
</organism>
<feature type="chain" id="PRO_1000165557" description="Small ribosomal subunit protein uS11">
    <location>
        <begin position="1"/>
        <end position="129"/>
    </location>
</feature>
<reference key="1">
    <citation type="journal article" date="2010" name="J. Bacteriol.">
        <title>Complete genome sequence of the aerobic facultative methanotroph Methylocella silvestris BL2.</title>
        <authorList>
            <person name="Chen Y."/>
            <person name="Crombie A."/>
            <person name="Rahman M.T."/>
            <person name="Dedysh S.N."/>
            <person name="Liesack W."/>
            <person name="Stott M.B."/>
            <person name="Alam M."/>
            <person name="Theisen A.R."/>
            <person name="Murrell J.C."/>
            <person name="Dunfield P.F."/>
        </authorList>
    </citation>
    <scope>NUCLEOTIDE SEQUENCE [LARGE SCALE GENOMIC DNA]</scope>
    <source>
        <strain>DSM 15510 / CIP 108128 / LMG 27833 / NCIMB 13906 / BL2</strain>
    </source>
</reference>
<name>RS11_METSB</name>